<sequence length="75" mass="8791">MASQEDPVQREIHQDWANREYIEVITSSIKKIADFLNSFDMSCRSRLATLNEKLTTLERRIEYIEARVTKGETLT</sequence>
<keyword id="KW-0175">Coiled coil</keyword>
<keyword id="KW-0963">Cytoplasm</keyword>
<keyword id="KW-0206">Cytoskeleton</keyword>
<keyword id="KW-1185">Reference proteome</keyword>
<gene>
    <name type="primary">brk1-b</name>
</gene>
<feature type="chain" id="PRO_0000283649" description="Probable protein BRICK1-B">
    <location>
        <begin position="1"/>
        <end position="75"/>
    </location>
</feature>
<feature type="coiled-coil region" evidence="2">
    <location>
        <begin position="41"/>
        <end position="72"/>
    </location>
</feature>
<reference key="1">
    <citation type="submission" date="2006-12" db="EMBL/GenBank/DDBJ databases">
        <authorList>
            <consortium name="NIH - Xenopus Gene Collection (XGC) project"/>
        </authorList>
    </citation>
    <scope>NUCLEOTIDE SEQUENCE [LARGE SCALE MRNA]</scope>
    <source>
        <tissue>Hind limb</tissue>
    </source>
</reference>
<protein>
    <recommendedName>
        <fullName>Probable protein BRICK1-B</fullName>
    </recommendedName>
</protein>
<evidence type="ECO:0000250" key="1"/>
<evidence type="ECO:0000255" key="2"/>
<evidence type="ECO:0000305" key="3"/>
<dbReference type="EMBL" id="BC128952">
    <property type="protein sequence ID" value="AAI28953.1"/>
    <property type="molecule type" value="mRNA"/>
</dbReference>
<dbReference type="RefSeq" id="NP_001165171.1">
    <property type="nucleotide sequence ID" value="NM_001171700.1"/>
</dbReference>
<dbReference type="SMR" id="A2BD66"/>
<dbReference type="DNASU" id="100037105"/>
<dbReference type="GeneID" id="100037105"/>
<dbReference type="KEGG" id="xla:100037105"/>
<dbReference type="AGR" id="Xenbase:XB-GENE-1009803"/>
<dbReference type="CTD" id="100037105"/>
<dbReference type="Xenbase" id="XB-GENE-1009803">
    <property type="gene designation" value="brk1.S"/>
</dbReference>
<dbReference type="OMA" id="WEQREFI"/>
<dbReference type="OrthoDB" id="1883432at2759"/>
<dbReference type="Proteomes" id="UP000186698">
    <property type="component" value="Chromosome 4S"/>
</dbReference>
<dbReference type="Bgee" id="100037105">
    <property type="expression patterns" value="Expressed in internal ear and 19 other cell types or tissues"/>
</dbReference>
<dbReference type="GO" id="GO:0005856">
    <property type="term" value="C:cytoskeleton"/>
    <property type="evidence" value="ECO:0007669"/>
    <property type="project" value="UniProtKB-SubCell"/>
</dbReference>
<dbReference type="GO" id="GO:0031209">
    <property type="term" value="C:SCAR complex"/>
    <property type="evidence" value="ECO:0000318"/>
    <property type="project" value="GO_Central"/>
</dbReference>
<dbReference type="GO" id="GO:0044877">
    <property type="term" value="F:protein-containing complex binding"/>
    <property type="evidence" value="ECO:0007669"/>
    <property type="project" value="InterPro"/>
</dbReference>
<dbReference type="GO" id="GO:0007015">
    <property type="term" value="P:actin filament organization"/>
    <property type="evidence" value="ECO:0007669"/>
    <property type="project" value="InterPro"/>
</dbReference>
<dbReference type="GO" id="GO:0048870">
    <property type="term" value="P:cell motility"/>
    <property type="evidence" value="ECO:0000318"/>
    <property type="project" value="GO_Central"/>
</dbReference>
<dbReference type="GO" id="GO:0008064">
    <property type="term" value="P:regulation of actin polymerization or depolymerization"/>
    <property type="evidence" value="ECO:0000318"/>
    <property type="project" value="GO_Central"/>
</dbReference>
<dbReference type="FunFam" id="1.20.5.110:FF:000017">
    <property type="entry name" value="BRICK1, SCAR/WAVE actin-nucleating complex subunit"/>
    <property type="match status" value="1"/>
</dbReference>
<dbReference type="Gene3D" id="1.20.5.110">
    <property type="match status" value="1"/>
</dbReference>
<dbReference type="InterPro" id="IPR033378">
    <property type="entry name" value="BRICK1"/>
</dbReference>
<dbReference type="PANTHER" id="PTHR33668">
    <property type="entry name" value="PROTEIN BRICK1"/>
    <property type="match status" value="1"/>
</dbReference>
<dbReference type="PANTHER" id="PTHR33668:SF1">
    <property type="entry name" value="PROTEIN BRICK1"/>
    <property type="match status" value="1"/>
</dbReference>
<proteinExistence type="inferred from homology"/>
<name>BRK1B_XENLA</name>
<organism>
    <name type="scientific">Xenopus laevis</name>
    <name type="common">African clawed frog</name>
    <dbReference type="NCBI Taxonomy" id="8355"/>
    <lineage>
        <taxon>Eukaryota</taxon>
        <taxon>Metazoa</taxon>
        <taxon>Chordata</taxon>
        <taxon>Craniata</taxon>
        <taxon>Vertebrata</taxon>
        <taxon>Euteleostomi</taxon>
        <taxon>Amphibia</taxon>
        <taxon>Batrachia</taxon>
        <taxon>Anura</taxon>
        <taxon>Pipoidea</taxon>
        <taxon>Pipidae</taxon>
        <taxon>Xenopodinae</taxon>
        <taxon>Xenopus</taxon>
        <taxon>Xenopus</taxon>
    </lineage>
</organism>
<comment type="function">
    <text evidence="1">Involved in regulation of actin and microtubule organization. Part of a WAVE complex that activates the Arp2/3 complex (By similarity).</text>
</comment>
<comment type="subcellular location">
    <subcellularLocation>
        <location evidence="1">Cytoplasm</location>
        <location evidence="1">Cytoskeleton</location>
    </subcellularLocation>
</comment>
<comment type="similarity">
    <text evidence="3">Belongs to the BRK1 family.</text>
</comment>
<accession>A2BD66</accession>